<organism>
    <name type="scientific">Buchnera aphidicola subsp. Acyrthosiphon pisum (strain 5A)</name>
    <dbReference type="NCBI Taxonomy" id="563178"/>
    <lineage>
        <taxon>Bacteria</taxon>
        <taxon>Pseudomonadati</taxon>
        <taxon>Pseudomonadota</taxon>
        <taxon>Gammaproteobacteria</taxon>
        <taxon>Enterobacterales</taxon>
        <taxon>Erwiniaceae</taxon>
        <taxon>Buchnera</taxon>
    </lineage>
</organism>
<keyword id="KW-0227">DNA damage</keyword>
<keyword id="KW-0234">DNA repair</keyword>
<keyword id="KW-0235">DNA replication</keyword>
<keyword id="KW-0436">Ligase</keyword>
<keyword id="KW-0460">Magnesium</keyword>
<keyword id="KW-0464">Manganese</keyword>
<keyword id="KW-0479">Metal-binding</keyword>
<keyword id="KW-0520">NAD</keyword>
<keyword id="KW-0862">Zinc</keyword>
<evidence type="ECO:0000255" key="1">
    <source>
        <dbReference type="HAMAP-Rule" id="MF_01588"/>
    </source>
</evidence>
<comment type="function">
    <text evidence="1">DNA ligase that catalyzes the formation of phosphodiester linkages between 5'-phosphoryl and 3'-hydroxyl groups in double-stranded DNA using NAD as a coenzyme and as the energy source for the reaction. It is essential for DNA replication and repair of damaged DNA.</text>
</comment>
<comment type="catalytic activity">
    <reaction evidence="1">
        <text>NAD(+) + (deoxyribonucleotide)n-3'-hydroxyl + 5'-phospho-(deoxyribonucleotide)m = (deoxyribonucleotide)n+m + AMP + beta-nicotinamide D-nucleotide.</text>
        <dbReference type="EC" id="6.5.1.2"/>
    </reaction>
</comment>
<comment type="cofactor">
    <cofactor evidence="1">
        <name>Mg(2+)</name>
        <dbReference type="ChEBI" id="CHEBI:18420"/>
    </cofactor>
    <cofactor evidence="1">
        <name>Mn(2+)</name>
        <dbReference type="ChEBI" id="CHEBI:29035"/>
    </cofactor>
</comment>
<comment type="similarity">
    <text evidence="1">Belongs to the NAD-dependent DNA ligase family. LigA subfamily.</text>
</comment>
<feature type="chain" id="PRO_0000380320" description="DNA ligase">
    <location>
        <begin position="1"/>
        <end position="675"/>
    </location>
</feature>
<feature type="domain" description="BRCT" evidence="1">
    <location>
        <begin position="595"/>
        <end position="675"/>
    </location>
</feature>
<feature type="active site" description="N6-AMP-lysine intermediate" evidence="1">
    <location>
        <position position="115"/>
    </location>
</feature>
<feature type="binding site" evidence="1">
    <location>
        <begin position="32"/>
        <end position="36"/>
    </location>
    <ligand>
        <name>NAD(+)</name>
        <dbReference type="ChEBI" id="CHEBI:57540"/>
    </ligand>
</feature>
<feature type="binding site" evidence="1">
    <location>
        <begin position="81"/>
        <end position="82"/>
    </location>
    <ligand>
        <name>NAD(+)</name>
        <dbReference type="ChEBI" id="CHEBI:57540"/>
    </ligand>
</feature>
<feature type="binding site" evidence="1">
    <location>
        <position position="113"/>
    </location>
    <ligand>
        <name>NAD(+)</name>
        <dbReference type="ChEBI" id="CHEBI:57540"/>
    </ligand>
</feature>
<feature type="binding site" evidence="1">
    <location>
        <position position="136"/>
    </location>
    <ligand>
        <name>NAD(+)</name>
        <dbReference type="ChEBI" id="CHEBI:57540"/>
    </ligand>
</feature>
<feature type="binding site" evidence="1">
    <location>
        <position position="173"/>
    </location>
    <ligand>
        <name>NAD(+)</name>
        <dbReference type="ChEBI" id="CHEBI:57540"/>
    </ligand>
</feature>
<feature type="binding site" evidence="1">
    <location>
        <position position="291"/>
    </location>
    <ligand>
        <name>NAD(+)</name>
        <dbReference type="ChEBI" id="CHEBI:57540"/>
    </ligand>
</feature>
<feature type="binding site" evidence="1">
    <location>
        <position position="315"/>
    </location>
    <ligand>
        <name>NAD(+)</name>
        <dbReference type="ChEBI" id="CHEBI:57540"/>
    </ligand>
</feature>
<feature type="binding site" evidence="1">
    <location>
        <position position="409"/>
    </location>
    <ligand>
        <name>Zn(2+)</name>
        <dbReference type="ChEBI" id="CHEBI:29105"/>
    </ligand>
</feature>
<feature type="binding site" evidence="1">
    <location>
        <position position="412"/>
    </location>
    <ligand>
        <name>Zn(2+)</name>
        <dbReference type="ChEBI" id="CHEBI:29105"/>
    </ligand>
</feature>
<feature type="binding site" evidence="1">
    <location>
        <position position="427"/>
    </location>
    <ligand>
        <name>Zn(2+)</name>
        <dbReference type="ChEBI" id="CHEBI:29105"/>
    </ligand>
</feature>
<feature type="binding site" evidence="1">
    <location>
        <position position="433"/>
    </location>
    <ligand>
        <name>Zn(2+)</name>
        <dbReference type="ChEBI" id="CHEBI:29105"/>
    </ligand>
</feature>
<protein>
    <recommendedName>
        <fullName evidence="1">DNA ligase</fullName>
        <ecNumber evidence="1">6.5.1.2</ecNumber>
    </recommendedName>
    <alternativeName>
        <fullName evidence="1">Polydeoxyribonucleotide synthase [NAD(+)]</fullName>
    </alternativeName>
</protein>
<dbReference type="EC" id="6.5.1.2" evidence="1"/>
<dbReference type="EMBL" id="CP001161">
    <property type="protein sequence ID" value="ACL30447.1"/>
    <property type="molecule type" value="Genomic_DNA"/>
</dbReference>
<dbReference type="RefSeq" id="WP_009874024.1">
    <property type="nucleotide sequence ID" value="NC_011833.1"/>
</dbReference>
<dbReference type="SMR" id="B8D8M5"/>
<dbReference type="KEGG" id="bap:BUAP5A_066"/>
<dbReference type="HOGENOM" id="CLU_007764_2_1_6"/>
<dbReference type="OrthoDB" id="9759736at2"/>
<dbReference type="Proteomes" id="UP000006904">
    <property type="component" value="Chromosome"/>
</dbReference>
<dbReference type="GO" id="GO:0005829">
    <property type="term" value="C:cytosol"/>
    <property type="evidence" value="ECO:0007669"/>
    <property type="project" value="TreeGrafter"/>
</dbReference>
<dbReference type="GO" id="GO:0003677">
    <property type="term" value="F:DNA binding"/>
    <property type="evidence" value="ECO:0007669"/>
    <property type="project" value="InterPro"/>
</dbReference>
<dbReference type="GO" id="GO:0003911">
    <property type="term" value="F:DNA ligase (NAD+) activity"/>
    <property type="evidence" value="ECO:0007669"/>
    <property type="project" value="UniProtKB-UniRule"/>
</dbReference>
<dbReference type="GO" id="GO:0046872">
    <property type="term" value="F:metal ion binding"/>
    <property type="evidence" value="ECO:0007669"/>
    <property type="project" value="UniProtKB-KW"/>
</dbReference>
<dbReference type="GO" id="GO:0006281">
    <property type="term" value="P:DNA repair"/>
    <property type="evidence" value="ECO:0007669"/>
    <property type="project" value="UniProtKB-KW"/>
</dbReference>
<dbReference type="GO" id="GO:0006260">
    <property type="term" value="P:DNA replication"/>
    <property type="evidence" value="ECO:0007669"/>
    <property type="project" value="UniProtKB-KW"/>
</dbReference>
<dbReference type="CDD" id="cd17748">
    <property type="entry name" value="BRCT_DNA_ligase_like"/>
    <property type="match status" value="1"/>
</dbReference>
<dbReference type="CDD" id="cd00114">
    <property type="entry name" value="LIGANc"/>
    <property type="match status" value="1"/>
</dbReference>
<dbReference type="FunFam" id="3.30.470.30:FF:000001">
    <property type="entry name" value="DNA ligase"/>
    <property type="match status" value="1"/>
</dbReference>
<dbReference type="Gene3D" id="6.20.10.30">
    <property type="match status" value="1"/>
</dbReference>
<dbReference type="Gene3D" id="1.10.150.20">
    <property type="entry name" value="5' to 3' exonuclease, C-terminal subdomain"/>
    <property type="match status" value="2"/>
</dbReference>
<dbReference type="Gene3D" id="3.40.50.10190">
    <property type="entry name" value="BRCT domain"/>
    <property type="match status" value="1"/>
</dbReference>
<dbReference type="Gene3D" id="3.30.470.30">
    <property type="entry name" value="DNA ligase/mRNA capping enzyme"/>
    <property type="match status" value="1"/>
</dbReference>
<dbReference type="Gene3D" id="1.10.287.610">
    <property type="entry name" value="Helix hairpin bin"/>
    <property type="match status" value="1"/>
</dbReference>
<dbReference type="Gene3D" id="2.40.50.140">
    <property type="entry name" value="Nucleic acid-binding proteins"/>
    <property type="match status" value="1"/>
</dbReference>
<dbReference type="HAMAP" id="MF_01588">
    <property type="entry name" value="DNA_ligase_A"/>
    <property type="match status" value="1"/>
</dbReference>
<dbReference type="InterPro" id="IPR001357">
    <property type="entry name" value="BRCT_dom"/>
</dbReference>
<dbReference type="InterPro" id="IPR036420">
    <property type="entry name" value="BRCT_dom_sf"/>
</dbReference>
<dbReference type="InterPro" id="IPR041663">
    <property type="entry name" value="DisA/LigA_HHH"/>
</dbReference>
<dbReference type="InterPro" id="IPR001679">
    <property type="entry name" value="DNA_ligase"/>
</dbReference>
<dbReference type="InterPro" id="IPR018239">
    <property type="entry name" value="DNA_ligase_AS"/>
</dbReference>
<dbReference type="InterPro" id="IPR033136">
    <property type="entry name" value="DNA_ligase_CS"/>
</dbReference>
<dbReference type="InterPro" id="IPR013839">
    <property type="entry name" value="DNAligase_adenylation"/>
</dbReference>
<dbReference type="InterPro" id="IPR013840">
    <property type="entry name" value="DNAligase_N"/>
</dbReference>
<dbReference type="InterPro" id="IPR003583">
    <property type="entry name" value="Hlx-hairpin-Hlx_DNA-bd_motif"/>
</dbReference>
<dbReference type="InterPro" id="IPR012340">
    <property type="entry name" value="NA-bd_OB-fold"/>
</dbReference>
<dbReference type="InterPro" id="IPR004150">
    <property type="entry name" value="NAD_DNA_ligase_OB"/>
</dbReference>
<dbReference type="InterPro" id="IPR010994">
    <property type="entry name" value="RuvA_2-like"/>
</dbReference>
<dbReference type="NCBIfam" id="TIGR00575">
    <property type="entry name" value="dnlj"/>
    <property type="match status" value="1"/>
</dbReference>
<dbReference type="NCBIfam" id="NF005932">
    <property type="entry name" value="PRK07956.1"/>
    <property type="match status" value="1"/>
</dbReference>
<dbReference type="PANTHER" id="PTHR23389">
    <property type="entry name" value="CHROMOSOME TRANSMISSION FIDELITY FACTOR 18"/>
    <property type="match status" value="1"/>
</dbReference>
<dbReference type="PANTHER" id="PTHR23389:SF9">
    <property type="entry name" value="DNA LIGASE"/>
    <property type="match status" value="1"/>
</dbReference>
<dbReference type="Pfam" id="PF00533">
    <property type="entry name" value="BRCT"/>
    <property type="match status" value="1"/>
</dbReference>
<dbReference type="Pfam" id="PF01653">
    <property type="entry name" value="DNA_ligase_aden"/>
    <property type="match status" value="1"/>
</dbReference>
<dbReference type="Pfam" id="PF03120">
    <property type="entry name" value="DNA_ligase_OB"/>
    <property type="match status" value="1"/>
</dbReference>
<dbReference type="Pfam" id="PF12826">
    <property type="entry name" value="HHH_2"/>
    <property type="match status" value="1"/>
</dbReference>
<dbReference type="Pfam" id="PF22745">
    <property type="entry name" value="Nlig-Ia"/>
    <property type="match status" value="1"/>
</dbReference>
<dbReference type="PIRSF" id="PIRSF001604">
    <property type="entry name" value="LigA"/>
    <property type="match status" value="1"/>
</dbReference>
<dbReference type="SMART" id="SM00292">
    <property type="entry name" value="BRCT"/>
    <property type="match status" value="1"/>
</dbReference>
<dbReference type="SMART" id="SM00278">
    <property type="entry name" value="HhH1"/>
    <property type="match status" value="3"/>
</dbReference>
<dbReference type="SMART" id="SM00532">
    <property type="entry name" value="LIGANc"/>
    <property type="match status" value="1"/>
</dbReference>
<dbReference type="SUPFAM" id="SSF52113">
    <property type="entry name" value="BRCT domain"/>
    <property type="match status" value="1"/>
</dbReference>
<dbReference type="SUPFAM" id="SSF56091">
    <property type="entry name" value="DNA ligase/mRNA capping enzyme, catalytic domain"/>
    <property type="match status" value="1"/>
</dbReference>
<dbReference type="SUPFAM" id="SSF50249">
    <property type="entry name" value="Nucleic acid-binding proteins"/>
    <property type="match status" value="1"/>
</dbReference>
<dbReference type="SUPFAM" id="SSF47781">
    <property type="entry name" value="RuvA domain 2-like"/>
    <property type="match status" value="1"/>
</dbReference>
<dbReference type="PROSITE" id="PS50172">
    <property type="entry name" value="BRCT"/>
    <property type="match status" value="1"/>
</dbReference>
<dbReference type="PROSITE" id="PS01055">
    <property type="entry name" value="DNA_LIGASE_N1"/>
    <property type="match status" value="1"/>
</dbReference>
<dbReference type="PROSITE" id="PS01056">
    <property type="entry name" value="DNA_LIGASE_N2"/>
    <property type="match status" value="1"/>
</dbReference>
<name>DNLJ_BUCA5</name>
<proteinExistence type="inferred from homology"/>
<gene>
    <name evidence="1" type="primary">ligA</name>
    <name type="ordered locus">BUAP5A_066</name>
</gene>
<reference key="1">
    <citation type="journal article" date="2009" name="Science">
        <title>The dynamics and time scale of ongoing genomic erosion in symbiotic bacteria.</title>
        <authorList>
            <person name="Moran N.A."/>
            <person name="McLaughlin H.J."/>
            <person name="Sorek R."/>
        </authorList>
    </citation>
    <scope>NUCLEOTIDE SEQUENCE [LARGE SCALE GENOMIC DNA]</scope>
    <source>
        <strain>5A</strain>
    </source>
</reference>
<accession>B8D8M5</accession>
<sequence length="675" mass="77559">MTSTKDKIEKLRKILLKYEYFYHTLNQSIISDAEYDYLFRQLYELELKHKELIPSDSPTQKVGSHILQKFKKIKHFSPMLSLENTFDVNGYLNFKKRIKKSIHNNEPLSFCCELKLDGVAISIIYEEGIFVRAATRGDGFEGENITSNARMIDSIPLKLKGIDIPKRLEIRGEVFMLKSNFIKLNKKYKLNQNKYFSNPRNAAAGSLRHIDPNITAERKLIFSCHGCDFFVKTNKELTTHYQRLMKCLSWGIPVNKEIVICSSDIEIIQFYKKIAQKRNFLDFDIDGIVIKVNSLELQKKIGSTTKSPRWAIAFKFSPKERITTLNDVKFQVGRTGVITPVAYFNPVYISGVMISKASLHNKNEIERLNLHFNDTITICRSGDVIPRLLNVIEIRRCDNAKKIIFPSFCPVCNTELLENIEEKLIRCHSGLTCDAQKKQALYHFFSKKSLYVVGLGPKIINELVEKGLVKNPIDFFYLKDIDLIQLKNVGKRKSIKIINSIKKCKKTTLKCFIYALGIPGVGEVVAGKIANYFIKLDKLMNSNILELNCISGVGKIISNNIFNYFSTISNREMVVKLIKQAGIFLNDQEIHKINSEKTYFFNKKIVLTGVFKSFSRIELKTILLSLGAKISNNISRKTDFLIYGNNFGSKFFRAKDLDVKIINQEELNSLIRIKE</sequence>